<proteinExistence type="inferred from homology"/>
<accession>Q39ZT2</accession>
<sequence length="217" mass="24302">MQNRLQELLTRIGLSLEKPVCDRLLWYLDEMLRWNRRINLTAIENKEEALEKHLLDSLTVVPLLRGDERLLDMGSGAGLPSIPIKIARPQMCVLSVDSVHKKIVFQQHVARQLKLQGFEARACRIQSLSQGESETSFDVVTARALTHLSDLLSMAEPLLNDKGRLIAMKGPDGEAELAECAQQIRKAGFVAEPLQHLSLPLSGSERTLVVLKRKPGR</sequence>
<name>RSMG_SYNC1</name>
<protein>
    <recommendedName>
        <fullName evidence="1">Ribosomal RNA small subunit methyltransferase G</fullName>
        <ecNumber evidence="1">2.1.1.170</ecNumber>
    </recommendedName>
    <alternativeName>
        <fullName evidence="1">16S rRNA 7-methylguanosine methyltransferase</fullName>
        <shortName evidence="1">16S rRNA m7G methyltransferase</shortName>
    </alternativeName>
</protein>
<dbReference type="EC" id="2.1.1.170" evidence="1"/>
<dbReference type="EMBL" id="CP000142">
    <property type="protein sequence ID" value="ABA90375.1"/>
    <property type="molecule type" value="Genomic_DNA"/>
</dbReference>
<dbReference type="RefSeq" id="WP_011342931.1">
    <property type="nucleotide sequence ID" value="NC_007498.2"/>
</dbReference>
<dbReference type="SMR" id="Q39ZT2"/>
<dbReference type="STRING" id="338963.Pcar_3140"/>
<dbReference type="KEGG" id="pca:Pcar_3140"/>
<dbReference type="eggNOG" id="COG0357">
    <property type="taxonomic scope" value="Bacteria"/>
</dbReference>
<dbReference type="HOGENOM" id="CLU_065341_0_1_7"/>
<dbReference type="OrthoDB" id="9808773at2"/>
<dbReference type="Proteomes" id="UP000002534">
    <property type="component" value="Chromosome"/>
</dbReference>
<dbReference type="GO" id="GO:0005829">
    <property type="term" value="C:cytosol"/>
    <property type="evidence" value="ECO:0007669"/>
    <property type="project" value="TreeGrafter"/>
</dbReference>
<dbReference type="GO" id="GO:0070043">
    <property type="term" value="F:rRNA (guanine-N7-)-methyltransferase activity"/>
    <property type="evidence" value="ECO:0007669"/>
    <property type="project" value="UniProtKB-UniRule"/>
</dbReference>
<dbReference type="Gene3D" id="3.40.50.150">
    <property type="entry name" value="Vaccinia Virus protein VP39"/>
    <property type="match status" value="1"/>
</dbReference>
<dbReference type="HAMAP" id="MF_00074">
    <property type="entry name" value="16SrRNA_methyltr_G"/>
    <property type="match status" value="1"/>
</dbReference>
<dbReference type="InterPro" id="IPR003682">
    <property type="entry name" value="rRNA_ssu_MeTfrase_G"/>
</dbReference>
<dbReference type="InterPro" id="IPR029063">
    <property type="entry name" value="SAM-dependent_MTases_sf"/>
</dbReference>
<dbReference type="NCBIfam" id="TIGR00138">
    <property type="entry name" value="rsmG_gidB"/>
    <property type="match status" value="1"/>
</dbReference>
<dbReference type="PANTHER" id="PTHR31760">
    <property type="entry name" value="S-ADENOSYL-L-METHIONINE-DEPENDENT METHYLTRANSFERASES SUPERFAMILY PROTEIN"/>
    <property type="match status" value="1"/>
</dbReference>
<dbReference type="PANTHER" id="PTHR31760:SF0">
    <property type="entry name" value="S-ADENOSYL-L-METHIONINE-DEPENDENT METHYLTRANSFERASES SUPERFAMILY PROTEIN"/>
    <property type="match status" value="1"/>
</dbReference>
<dbReference type="Pfam" id="PF02527">
    <property type="entry name" value="GidB"/>
    <property type="match status" value="1"/>
</dbReference>
<dbReference type="PIRSF" id="PIRSF003078">
    <property type="entry name" value="GidB"/>
    <property type="match status" value="1"/>
</dbReference>
<dbReference type="SUPFAM" id="SSF53335">
    <property type="entry name" value="S-adenosyl-L-methionine-dependent methyltransferases"/>
    <property type="match status" value="1"/>
</dbReference>
<keyword id="KW-0963">Cytoplasm</keyword>
<keyword id="KW-0489">Methyltransferase</keyword>
<keyword id="KW-1185">Reference proteome</keyword>
<keyword id="KW-0698">rRNA processing</keyword>
<keyword id="KW-0949">S-adenosyl-L-methionine</keyword>
<keyword id="KW-0808">Transferase</keyword>
<comment type="function">
    <text evidence="1">Specifically methylates the N7 position of guanine in position 527 of 16S rRNA.</text>
</comment>
<comment type="catalytic activity">
    <reaction evidence="1">
        <text>guanosine(527) in 16S rRNA + S-adenosyl-L-methionine = N(7)-methylguanosine(527) in 16S rRNA + S-adenosyl-L-homocysteine</text>
        <dbReference type="Rhea" id="RHEA:42732"/>
        <dbReference type="Rhea" id="RHEA-COMP:10209"/>
        <dbReference type="Rhea" id="RHEA-COMP:10210"/>
        <dbReference type="ChEBI" id="CHEBI:57856"/>
        <dbReference type="ChEBI" id="CHEBI:59789"/>
        <dbReference type="ChEBI" id="CHEBI:74269"/>
        <dbReference type="ChEBI" id="CHEBI:74480"/>
        <dbReference type="EC" id="2.1.1.170"/>
    </reaction>
</comment>
<comment type="subcellular location">
    <subcellularLocation>
        <location evidence="1">Cytoplasm</location>
    </subcellularLocation>
</comment>
<comment type="similarity">
    <text evidence="1">Belongs to the methyltransferase superfamily. RNA methyltransferase RsmG family.</text>
</comment>
<feature type="chain" id="PRO_0000335391" description="Ribosomal RNA small subunit methyltransferase G">
    <location>
        <begin position="1"/>
        <end position="217"/>
    </location>
</feature>
<feature type="binding site" evidence="1">
    <location>
        <position position="74"/>
    </location>
    <ligand>
        <name>S-adenosyl-L-methionine</name>
        <dbReference type="ChEBI" id="CHEBI:59789"/>
    </ligand>
</feature>
<feature type="binding site" evidence="1">
    <location>
        <position position="79"/>
    </location>
    <ligand>
        <name>S-adenosyl-L-methionine</name>
        <dbReference type="ChEBI" id="CHEBI:59789"/>
    </ligand>
</feature>
<feature type="binding site" evidence="1">
    <location>
        <begin position="125"/>
        <end position="126"/>
    </location>
    <ligand>
        <name>S-adenosyl-L-methionine</name>
        <dbReference type="ChEBI" id="CHEBI:59789"/>
    </ligand>
</feature>
<feature type="binding site" evidence="1">
    <location>
        <position position="143"/>
    </location>
    <ligand>
        <name>S-adenosyl-L-methionine</name>
        <dbReference type="ChEBI" id="CHEBI:59789"/>
    </ligand>
</feature>
<organism>
    <name type="scientific">Syntrophotalea carbinolica (strain DSM 2380 / NBRC 103641 / GraBd1)</name>
    <name type="common">Pelobacter carbinolicus</name>
    <dbReference type="NCBI Taxonomy" id="338963"/>
    <lineage>
        <taxon>Bacteria</taxon>
        <taxon>Pseudomonadati</taxon>
        <taxon>Thermodesulfobacteriota</taxon>
        <taxon>Desulfuromonadia</taxon>
        <taxon>Desulfuromonadales</taxon>
        <taxon>Syntrophotaleaceae</taxon>
        <taxon>Syntrophotalea</taxon>
    </lineage>
</organism>
<gene>
    <name evidence="1" type="primary">rsmG</name>
    <name type="ordered locus">Pcar_3140</name>
</gene>
<evidence type="ECO:0000255" key="1">
    <source>
        <dbReference type="HAMAP-Rule" id="MF_00074"/>
    </source>
</evidence>
<reference key="1">
    <citation type="submission" date="2005-10" db="EMBL/GenBank/DDBJ databases">
        <title>Complete sequence of Pelobacter carbinolicus DSM 2380.</title>
        <authorList>
            <person name="Copeland A."/>
            <person name="Lucas S."/>
            <person name="Lapidus A."/>
            <person name="Barry K."/>
            <person name="Detter J.C."/>
            <person name="Glavina T."/>
            <person name="Hammon N."/>
            <person name="Israni S."/>
            <person name="Pitluck S."/>
            <person name="Chertkov O."/>
            <person name="Schmutz J."/>
            <person name="Larimer F."/>
            <person name="Land M."/>
            <person name="Kyrpides N."/>
            <person name="Ivanova N."/>
            <person name="Richardson P."/>
        </authorList>
    </citation>
    <scope>NUCLEOTIDE SEQUENCE [LARGE SCALE GENOMIC DNA]</scope>
    <source>
        <strain>DSM 2380 / NBRC 103641 / GraBd1</strain>
    </source>
</reference>